<organism>
    <name type="scientific">Dictyoglomus turgidum (strain DSM 6724 / Z-1310)</name>
    <dbReference type="NCBI Taxonomy" id="515635"/>
    <lineage>
        <taxon>Bacteria</taxon>
        <taxon>Pseudomonadati</taxon>
        <taxon>Dictyoglomota</taxon>
        <taxon>Dictyoglomia</taxon>
        <taxon>Dictyoglomales</taxon>
        <taxon>Dictyoglomaceae</taxon>
        <taxon>Dictyoglomus</taxon>
    </lineage>
</organism>
<keyword id="KW-0066">ATP synthesis</keyword>
<keyword id="KW-0375">Hydrogen ion transport</keyword>
<keyword id="KW-0406">Ion transport</keyword>
<keyword id="KW-1185">Reference proteome</keyword>
<keyword id="KW-0813">Transport</keyword>
<dbReference type="EMBL" id="CP001251">
    <property type="protein sequence ID" value="ACK42774.1"/>
    <property type="molecule type" value="Genomic_DNA"/>
</dbReference>
<dbReference type="RefSeq" id="WP_012583852.1">
    <property type="nucleotide sequence ID" value="NC_011661.1"/>
</dbReference>
<dbReference type="RefSeq" id="YP_002353388.1">
    <property type="nucleotide sequence ID" value="NC_011661.1"/>
</dbReference>
<dbReference type="SMR" id="B8E137"/>
<dbReference type="STRING" id="515635.Dtur_1500"/>
<dbReference type="EnsemblBacteria" id="ACK42774">
    <property type="protein sequence ID" value="ACK42774"/>
    <property type="gene ID" value="Dtur_1500"/>
</dbReference>
<dbReference type="KEGG" id="dtu:Dtur_1500"/>
<dbReference type="PATRIC" id="fig|515635.4.peg.1549"/>
<dbReference type="eggNOG" id="COG1156">
    <property type="taxonomic scope" value="Bacteria"/>
</dbReference>
<dbReference type="HOGENOM" id="CLU_022916_0_0_0"/>
<dbReference type="InParanoid" id="B8E137"/>
<dbReference type="OrthoDB" id="9802718at2"/>
<dbReference type="Proteomes" id="UP000007719">
    <property type="component" value="Chromosome"/>
</dbReference>
<dbReference type="GO" id="GO:0005524">
    <property type="term" value="F:ATP binding"/>
    <property type="evidence" value="ECO:0007669"/>
    <property type="project" value="UniProtKB-UniRule"/>
</dbReference>
<dbReference type="GO" id="GO:0046933">
    <property type="term" value="F:proton-transporting ATP synthase activity, rotational mechanism"/>
    <property type="evidence" value="ECO:0007669"/>
    <property type="project" value="UniProtKB-UniRule"/>
</dbReference>
<dbReference type="GO" id="GO:0042777">
    <property type="term" value="P:proton motive force-driven plasma membrane ATP synthesis"/>
    <property type="evidence" value="ECO:0007669"/>
    <property type="project" value="UniProtKB-UniRule"/>
</dbReference>
<dbReference type="CDD" id="cd18112">
    <property type="entry name" value="ATP-synt_V_A-type_beta_C"/>
    <property type="match status" value="1"/>
</dbReference>
<dbReference type="CDD" id="cd18118">
    <property type="entry name" value="ATP-synt_V_A-type_beta_N"/>
    <property type="match status" value="1"/>
</dbReference>
<dbReference type="CDD" id="cd01135">
    <property type="entry name" value="V_A-ATPase_B"/>
    <property type="match status" value="1"/>
</dbReference>
<dbReference type="Gene3D" id="3.40.50.12240">
    <property type="match status" value="1"/>
</dbReference>
<dbReference type="HAMAP" id="MF_00310">
    <property type="entry name" value="ATP_synth_B_arch"/>
    <property type="match status" value="1"/>
</dbReference>
<dbReference type="InterPro" id="IPR055190">
    <property type="entry name" value="ATP-synt_VA_C"/>
</dbReference>
<dbReference type="InterPro" id="IPR020003">
    <property type="entry name" value="ATPase_a/bsu_AS"/>
</dbReference>
<dbReference type="InterPro" id="IPR004100">
    <property type="entry name" value="ATPase_F1/V1/A1_a/bsu_N"/>
</dbReference>
<dbReference type="InterPro" id="IPR000194">
    <property type="entry name" value="ATPase_F1/V1/A1_a/bsu_nucl-bd"/>
</dbReference>
<dbReference type="InterPro" id="IPR027417">
    <property type="entry name" value="P-loop_NTPase"/>
</dbReference>
<dbReference type="InterPro" id="IPR022879">
    <property type="entry name" value="V-ATPase_su_B/beta"/>
</dbReference>
<dbReference type="NCBIfam" id="NF003235">
    <property type="entry name" value="PRK04196.1"/>
    <property type="match status" value="1"/>
</dbReference>
<dbReference type="PANTHER" id="PTHR43389">
    <property type="entry name" value="V-TYPE PROTON ATPASE SUBUNIT B"/>
    <property type="match status" value="1"/>
</dbReference>
<dbReference type="PANTHER" id="PTHR43389:SF4">
    <property type="entry name" value="V-TYPE PROTON ATPASE SUBUNIT B"/>
    <property type="match status" value="1"/>
</dbReference>
<dbReference type="Pfam" id="PF00006">
    <property type="entry name" value="ATP-synt_ab"/>
    <property type="match status" value="1"/>
</dbReference>
<dbReference type="Pfam" id="PF02874">
    <property type="entry name" value="ATP-synt_ab_N"/>
    <property type="match status" value="1"/>
</dbReference>
<dbReference type="Pfam" id="PF22919">
    <property type="entry name" value="ATP-synt_VA_C"/>
    <property type="match status" value="1"/>
</dbReference>
<dbReference type="PIRSF" id="PIRSF039114">
    <property type="entry name" value="V-ATPsynth_beta/V-ATPase_B"/>
    <property type="match status" value="1"/>
</dbReference>
<dbReference type="SUPFAM" id="SSF52540">
    <property type="entry name" value="P-loop containing nucleoside triphosphate hydrolases"/>
    <property type="match status" value="1"/>
</dbReference>
<dbReference type="PROSITE" id="PS00152">
    <property type="entry name" value="ATPASE_ALPHA_BETA"/>
    <property type="match status" value="1"/>
</dbReference>
<protein>
    <recommendedName>
        <fullName evidence="1">V-type ATP synthase beta chain</fullName>
    </recommendedName>
    <alternativeName>
        <fullName evidence="1">V-ATPase subunit B</fullName>
    </alternativeName>
</protein>
<evidence type="ECO:0000255" key="1">
    <source>
        <dbReference type="HAMAP-Rule" id="MF_00310"/>
    </source>
</evidence>
<reference key="1">
    <citation type="journal article" date="2016" name="Front. Microbiol.">
        <title>The complete genome sequence of hyperthermophile Dictyoglomus turgidum DSM 6724 reveals a specialized carbohydrate fermentor.</title>
        <authorList>
            <person name="Brumm P.J."/>
            <person name="Gowda K."/>
            <person name="Robb F.T."/>
            <person name="Mead D.A."/>
        </authorList>
    </citation>
    <scope>NUCLEOTIDE SEQUENCE [LARGE SCALE GENOMIC DNA]</scope>
    <source>
        <strain>DSM 6724 / Z-1310</strain>
    </source>
</reference>
<proteinExistence type="inferred from homology"/>
<feature type="chain" id="PRO_1000119525" description="V-type ATP synthase beta chain">
    <location>
        <begin position="1"/>
        <end position="460"/>
    </location>
</feature>
<accession>B8E137</accession>
<gene>
    <name evidence="1" type="primary">atpB</name>
    <name type="ordered locus">Dtur_1500</name>
</gene>
<name>VATB_DICTD</name>
<sequence>MPKEYTSVSKISGPLVLVENIENVKYGEVVEVKLANGEIRQGQVLEAQEGAALVQMFASTQDLSLKGMRIKFLGHVLEINLSPEILGRTFDGLGRPRDGGPEIIPQKRMDINGSPINPYSRAYPQEFIQTGISAIDGMNTIVRGQKIPIFSGAGLPHATLAAQIARQARLLNEEEKFAVVFGAMGITFEEANFFIENFRSTGALERTVLFINLANDPVIERIATPRFALTAAEYLAFDLDMHVLVILSDMTNYAEALREVSASRKEVPGRRGYPGYLYTDLATLYERAGRIKGKKGSITLLPILTMPEDDRTHPIPDLTGYITEGQIFLSRELHRRGIYPPIDVLQSLSRLMRGGIGEGRTRKDHGDLSNQLYAAYSRGLEAKELAVVLGEAALTEEDVQFLEFAEAFEMEFIKQGEYENRSIFETLNLGWKLLRRLPRASLKRIRPEYLDEFWGKEDAS</sequence>
<comment type="function">
    <text evidence="1">Produces ATP from ADP in the presence of a proton gradient across the membrane. The V-type beta chain is a regulatory subunit.</text>
</comment>
<comment type="similarity">
    <text evidence="1">Belongs to the ATPase alpha/beta chains family.</text>
</comment>